<name>Y027_PARMW</name>
<protein>
    <recommendedName>
        <fullName evidence="1">Nucleoid-associated protein SYNW0027</fullName>
    </recommendedName>
</protein>
<sequence length="113" mass="12041">MAGFGLPNFGQLTEAFKKAQEIQQNAQALQDELDGMEIEGKSADGRASVWLSGNQQPLRVRLDPELLSAGQETCEAATLEALQAAYEQSTATMKGRMEELTGGLNLNLPGMGG</sequence>
<accession>Q7UA73</accession>
<evidence type="ECO:0000255" key="1">
    <source>
        <dbReference type="HAMAP-Rule" id="MF_00274"/>
    </source>
</evidence>
<keyword id="KW-0963">Cytoplasm</keyword>
<keyword id="KW-0238">DNA-binding</keyword>
<reference key="1">
    <citation type="journal article" date="2003" name="Nature">
        <title>The genome of a motile marine Synechococcus.</title>
        <authorList>
            <person name="Palenik B."/>
            <person name="Brahamsha B."/>
            <person name="Larimer F.W."/>
            <person name="Land M.L."/>
            <person name="Hauser L."/>
            <person name="Chain P."/>
            <person name="Lamerdin J.E."/>
            <person name="Regala W."/>
            <person name="Allen E.E."/>
            <person name="McCarren J."/>
            <person name="Paulsen I.T."/>
            <person name="Dufresne A."/>
            <person name="Partensky F."/>
            <person name="Webb E.A."/>
            <person name="Waterbury J."/>
        </authorList>
    </citation>
    <scope>NUCLEOTIDE SEQUENCE [LARGE SCALE GENOMIC DNA]</scope>
    <source>
        <strain>WH8102</strain>
    </source>
</reference>
<gene>
    <name type="ordered locus">SYNW0027</name>
</gene>
<proteinExistence type="inferred from homology"/>
<comment type="function">
    <text evidence="1">Binds to DNA and alters its conformation. May be involved in regulation of gene expression, nucleoid organization and DNA protection.</text>
</comment>
<comment type="subunit">
    <text evidence="1">Homodimer.</text>
</comment>
<comment type="subcellular location">
    <subcellularLocation>
        <location evidence="1">Cytoplasm</location>
        <location evidence="1">Nucleoid</location>
    </subcellularLocation>
</comment>
<comment type="similarity">
    <text evidence="1">Belongs to the YbaB/EbfC family.</text>
</comment>
<dbReference type="EMBL" id="BX569689">
    <property type="protein sequence ID" value="CAE06542.1"/>
    <property type="molecule type" value="Genomic_DNA"/>
</dbReference>
<dbReference type="RefSeq" id="WP_011126905.1">
    <property type="nucleotide sequence ID" value="NC_005070.1"/>
</dbReference>
<dbReference type="SMR" id="Q7UA73"/>
<dbReference type="STRING" id="84588.SYNW0027"/>
<dbReference type="KEGG" id="syw:SYNW0027"/>
<dbReference type="eggNOG" id="COG0718">
    <property type="taxonomic scope" value="Bacteria"/>
</dbReference>
<dbReference type="HOGENOM" id="CLU_140930_0_1_3"/>
<dbReference type="Proteomes" id="UP000001422">
    <property type="component" value="Chromosome"/>
</dbReference>
<dbReference type="GO" id="GO:0043590">
    <property type="term" value="C:bacterial nucleoid"/>
    <property type="evidence" value="ECO:0007669"/>
    <property type="project" value="UniProtKB-UniRule"/>
</dbReference>
<dbReference type="GO" id="GO:0005829">
    <property type="term" value="C:cytosol"/>
    <property type="evidence" value="ECO:0007669"/>
    <property type="project" value="TreeGrafter"/>
</dbReference>
<dbReference type="GO" id="GO:0003677">
    <property type="term" value="F:DNA binding"/>
    <property type="evidence" value="ECO:0007669"/>
    <property type="project" value="UniProtKB-UniRule"/>
</dbReference>
<dbReference type="Gene3D" id="3.30.1310.10">
    <property type="entry name" value="Nucleoid-associated protein YbaB-like domain"/>
    <property type="match status" value="1"/>
</dbReference>
<dbReference type="HAMAP" id="MF_00274">
    <property type="entry name" value="DNA_YbaB_EbfC"/>
    <property type="match status" value="1"/>
</dbReference>
<dbReference type="InterPro" id="IPR036894">
    <property type="entry name" value="YbaB-like_sf"/>
</dbReference>
<dbReference type="InterPro" id="IPR004401">
    <property type="entry name" value="YbaB/EbfC"/>
</dbReference>
<dbReference type="NCBIfam" id="TIGR00103">
    <property type="entry name" value="DNA_YbaB_EbfC"/>
    <property type="match status" value="1"/>
</dbReference>
<dbReference type="PANTHER" id="PTHR33449">
    <property type="entry name" value="NUCLEOID-ASSOCIATED PROTEIN YBAB"/>
    <property type="match status" value="1"/>
</dbReference>
<dbReference type="PANTHER" id="PTHR33449:SF1">
    <property type="entry name" value="NUCLEOID-ASSOCIATED PROTEIN YBAB"/>
    <property type="match status" value="1"/>
</dbReference>
<dbReference type="Pfam" id="PF02575">
    <property type="entry name" value="YbaB_DNA_bd"/>
    <property type="match status" value="1"/>
</dbReference>
<dbReference type="PIRSF" id="PIRSF004555">
    <property type="entry name" value="UCP004555"/>
    <property type="match status" value="1"/>
</dbReference>
<dbReference type="SUPFAM" id="SSF82607">
    <property type="entry name" value="YbaB-like"/>
    <property type="match status" value="1"/>
</dbReference>
<organism>
    <name type="scientific">Parasynechococcus marenigrum (strain WH8102)</name>
    <dbReference type="NCBI Taxonomy" id="84588"/>
    <lineage>
        <taxon>Bacteria</taxon>
        <taxon>Bacillati</taxon>
        <taxon>Cyanobacteriota</taxon>
        <taxon>Cyanophyceae</taxon>
        <taxon>Synechococcales</taxon>
        <taxon>Prochlorococcaceae</taxon>
        <taxon>Parasynechococcus</taxon>
        <taxon>Parasynechococcus marenigrum</taxon>
    </lineage>
</organism>
<feature type="chain" id="PRO_0000170456" description="Nucleoid-associated protein SYNW0027">
    <location>
        <begin position="1"/>
        <end position="113"/>
    </location>
</feature>